<accession>Q3A9R9</accession>
<name>RL2_CARHZ</name>
<proteinExistence type="inferred from homology"/>
<dbReference type="EMBL" id="CP000141">
    <property type="protein sequence ID" value="ABB13722.1"/>
    <property type="molecule type" value="Genomic_DNA"/>
</dbReference>
<dbReference type="RefSeq" id="WP_011345188.1">
    <property type="nucleotide sequence ID" value="NC_007503.1"/>
</dbReference>
<dbReference type="SMR" id="Q3A9R9"/>
<dbReference type="FunCoup" id="Q3A9R9">
    <property type="interactions" value="421"/>
</dbReference>
<dbReference type="STRING" id="246194.CHY_2306"/>
<dbReference type="KEGG" id="chy:CHY_2306"/>
<dbReference type="eggNOG" id="COG0090">
    <property type="taxonomic scope" value="Bacteria"/>
</dbReference>
<dbReference type="HOGENOM" id="CLU_036235_2_1_9"/>
<dbReference type="InParanoid" id="Q3A9R9"/>
<dbReference type="OrthoDB" id="9778722at2"/>
<dbReference type="Proteomes" id="UP000002706">
    <property type="component" value="Chromosome"/>
</dbReference>
<dbReference type="GO" id="GO:0015934">
    <property type="term" value="C:large ribosomal subunit"/>
    <property type="evidence" value="ECO:0007669"/>
    <property type="project" value="InterPro"/>
</dbReference>
<dbReference type="GO" id="GO:0019843">
    <property type="term" value="F:rRNA binding"/>
    <property type="evidence" value="ECO:0007669"/>
    <property type="project" value="UniProtKB-UniRule"/>
</dbReference>
<dbReference type="GO" id="GO:0003735">
    <property type="term" value="F:structural constituent of ribosome"/>
    <property type="evidence" value="ECO:0007669"/>
    <property type="project" value="InterPro"/>
</dbReference>
<dbReference type="GO" id="GO:0016740">
    <property type="term" value="F:transferase activity"/>
    <property type="evidence" value="ECO:0007669"/>
    <property type="project" value="InterPro"/>
</dbReference>
<dbReference type="GO" id="GO:0002181">
    <property type="term" value="P:cytoplasmic translation"/>
    <property type="evidence" value="ECO:0007669"/>
    <property type="project" value="TreeGrafter"/>
</dbReference>
<dbReference type="FunFam" id="2.30.30.30:FF:000001">
    <property type="entry name" value="50S ribosomal protein L2"/>
    <property type="match status" value="1"/>
</dbReference>
<dbReference type="FunFam" id="2.40.50.140:FF:000003">
    <property type="entry name" value="50S ribosomal protein L2"/>
    <property type="match status" value="1"/>
</dbReference>
<dbReference type="FunFam" id="4.10.950.10:FF:000001">
    <property type="entry name" value="50S ribosomal protein L2"/>
    <property type="match status" value="1"/>
</dbReference>
<dbReference type="Gene3D" id="2.30.30.30">
    <property type="match status" value="1"/>
</dbReference>
<dbReference type="Gene3D" id="2.40.50.140">
    <property type="entry name" value="Nucleic acid-binding proteins"/>
    <property type="match status" value="1"/>
</dbReference>
<dbReference type="Gene3D" id="4.10.950.10">
    <property type="entry name" value="Ribosomal protein L2, domain 3"/>
    <property type="match status" value="1"/>
</dbReference>
<dbReference type="HAMAP" id="MF_01320_B">
    <property type="entry name" value="Ribosomal_uL2_B"/>
    <property type="match status" value="1"/>
</dbReference>
<dbReference type="InterPro" id="IPR012340">
    <property type="entry name" value="NA-bd_OB-fold"/>
</dbReference>
<dbReference type="InterPro" id="IPR014722">
    <property type="entry name" value="Rib_uL2_dom2"/>
</dbReference>
<dbReference type="InterPro" id="IPR002171">
    <property type="entry name" value="Ribosomal_uL2"/>
</dbReference>
<dbReference type="InterPro" id="IPR005880">
    <property type="entry name" value="Ribosomal_uL2_bac/org-type"/>
</dbReference>
<dbReference type="InterPro" id="IPR022669">
    <property type="entry name" value="Ribosomal_uL2_C"/>
</dbReference>
<dbReference type="InterPro" id="IPR022671">
    <property type="entry name" value="Ribosomal_uL2_CS"/>
</dbReference>
<dbReference type="InterPro" id="IPR014726">
    <property type="entry name" value="Ribosomal_uL2_dom3"/>
</dbReference>
<dbReference type="InterPro" id="IPR022666">
    <property type="entry name" value="Ribosomal_uL2_RNA-bd_dom"/>
</dbReference>
<dbReference type="InterPro" id="IPR008991">
    <property type="entry name" value="Translation_prot_SH3-like_sf"/>
</dbReference>
<dbReference type="NCBIfam" id="TIGR01171">
    <property type="entry name" value="rplB_bact"/>
    <property type="match status" value="1"/>
</dbReference>
<dbReference type="PANTHER" id="PTHR13691:SF5">
    <property type="entry name" value="LARGE RIBOSOMAL SUBUNIT PROTEIN UL2M"/>
    <property type="match status" value="1"/>
</dbReference>
<dbReference type="PANTHER" id="PTHR13691">
    <property type="entry name" value="RIBOSOMAL PROTEIN L2"/>
    <property type="match status" value="1"/>
</dbReference>
<dbReference type="Pfam" id="PF00181">
    <property type="entry name" value="Ribosomal_L2"/>
    <property type="match status" value="1"/>
</dbReference>
<dbReference type="Pfam" id="PF03947">
    <property type="entry name" value="Ribosomal_L2_C"/>
    <property type="match status" value="1"/>
</dbReference>
<dbReference type="PIRSF" id="PIRSF002158">
    <property type="entry name" value="Ribosomal_L2"/>
    <property type="match status" value="1"/>
</dbReference>
<dbReference type="SMART" id="SM01383">
    <property type="entry name" value="Ribosomal_L2"/>
    <property type="match status" value="1"/>
</dbReference>
<dbReference type="SMART" id="SM01382">
    <property type="entry name" value="Ribosomal_L2_C"/>
    <property type="match status" value="1"/>
</dbReference>
<dbReference type="SUPFAM" id="SSF50249">
    <property type="entry name" value="Nucleic acid-binding proteins"/>
    <property type="match status" value="1"/>
</dbReference>
<dbReference type="SUPFAM" id="SSF50104">
    <property type="entry name" value="Translation proteins SH3-like domain"/>
    <property type="match status" value="1"/>
</dbReference>
<dbReference type="PROSITE" id="PS00467">
    <property type="entry name" value="RIBOSOMAL_L2"/>
    <property type="match status" value="1"/>
</dbReference>
<comment type="function">
    <text evidence="1">One of the primary rRNA binding proteins. Required for association of the 30S and 50S subunits to form the 70S ribosome, for tRNA binding and peptide bond formation. It has been suggested to have peptidyltransferase activity; this is somewhat controversial. Makes several contacts with the 16S rRNA in the 70S ribosome.</text>
</comment>
<comment type="subunit">
    <text evidence="1">Part of the 50S ribosomal subunit. Forms a bridge to the 30S subunit in the 70S ribosome.</text>
</comment>
<comment type="similarity">
    <text evidence="1">Belongs to the universal ribosomal protein uL2 family.</text>
</comment>
<reference key="1">
    <citation type="journal article" date="2005" name="PLoS Genet.">
        <title>Life in hot carbon monoxide: the complete genome sequence of Carboxydothermus hydrogenoformans Z-2901.</title>
        <authorList>
            <person name="Wu M."/>
            <person name="Ren Q."/>
            <person name="Durkin A.S."/>
            <person name="Daugherty S.C."/>
            <person name="Brinkac L.M."/>
            <person name="Dodson R.J."/>
            <person name="Madupu R."/>
            <person name="Sullivan S.A."/>
            <person name="Kolonay J.F."/>
            <person name="Nelson W.C."/>
            <person name="Tallon L.J."/>
            <person name="Jones K.M."/>
            <person name="Ulrich L.E."/>
            <person name="Gonzalez J.M."/>
            <person name="Zhulin I.B."/>
            <person name="Robb F.T."/>
            <person name="Eisen J.A."/>
        </authorList>
    </citation>
    <scope>NUCLEOTIDE SEQUENCE [LARGE SCALE GENOMIC DNA]</scope>
    <source>
        <strain>ATCC BAA-161 / DSM 6008 / Z-2901</strain>
    </source>
</reference>
<keyword id="KW-1185">Reference proteome</keyword>
<keyword id="KW-0687">Ribonucleoprotein</keyword>
<keyword id="KW-0689">Ribosomal protein</keyword>
<keyword id="KW-0694">RNA-binding</keyword>
<keyword id="KW-0699">rRNA-binding</keyword>
<gene>
    <name evidence="1" type="primary">rplB</name>
    <name type="ordered locus">CHY_2306</name>
</gene>
<sequence length="274" mass="29955">MAVKTYKPTSPGRRFVTVSSFEEITKTEPEKSLIVPLKKHAGRNNQGRLTVRHRGGGHKRMYRIIDFKRNKDGIPAKVVAIEYDPNRTARIALLAYADGEKRYIIAPHGLKVGDVLMSGPDADIKVGNALPLANIPVGTLVHNIELYPGKGGQLVRAAGTAAQLLGKEGRYAILRLPSGEMRKVLLECRATIGQVGNLEHENITIGKAGRARWLGIRPTVRGVVMNPVDHPHGGGEGRSPIGRHPVTPWGKPTLGVKTRKKNKASSKLIIKRRK</sequence>
<organism>
    <name type="scientific">Carboxydothermus hydrogenoformans (strain ATCC BAA-161 / DSM 6008 / Z-2901)</name>
    <dbReference type="NCBI Taxonomy" id="246194"/>
    <lineage>
        <taxon>Bacteria</taxon>
        <taxon>Bacillati</taxon>
        <taxon>Bacillota</taxon>
        <taxon>Clostridia</taxon>
        <taxon>Thermoanaerobacterales</taxon>
        <taxon>Thermoanaerobacteraceae</taxon>
        <taxon>Carboxydothermus</taxon>
    </lineage>
</organism>
<evidence type="ECO:0000255" key="1">
    <source>
        <dbReference type="HAMAP-Rule" id="MF_01320"/>
    </source>
</evidence>
<evidence type="ECO:0000256" key="2">
    <source>
        <dbReference type="SAM" id="MobiDB-lite"/>
    </source>
</evidence>
<evidence type="ECO:0000305" key="3"/>
<protein>
    <recommendedName>
        <fullName evidence="1">Large ribosomal subunit protein uL2</fullName>
    </recommendedName>
    <alternativeName>
        <fullName evidence="3">50S ribosomal protein L2</fullName>
    </alternativeName>
</protein>
<feature type="chain" id="PRO_0000237170" description="Large ribosomal subunit protein uL2">
    <location>
        <begin position="1"/>
        <end position="274"/>
    </location>
</feature>
<feature type="region of interest" description="Disordered" evidence="2">
    <location>
        <begin position="225"/>
        <end position="274"/>
    </location>
</feature>
<feature type="compositionally biased region" description="Basic residues" evidence="2">
    <location>
        <begin position="257"/>
        <end position="274"/>
    </location>
</feature>